<sequence>XIIGAPCRRCYHSDGKGGCVRDWSCGQQ</sequence>
<protein>
    <recommendedName>
        <fullName evidence="3">Kappa-stichotoxin-Shd1a/kappa-stichotoxin-Shd1b</fullName>
        <shortName evidence="3">Kappa-SHTX-Shd1a/kappa-SHTX-Shd1b</shortName>
    </recommendedName>
    <alternativeName>
        <fullName evidence="4">Kappa-AnmTX Sha 9a-1</fullName>
    </alternativeName>
    <alternativeName>
        <fullName evidence="2">Potassium channel toxin SHTX I/SHTX II</fullName>
    </alternativeName>
    <alternativeName>
        <fullName>Potassium channel toxin SHTX-1/SHTX-2</fullName>
    </alternativeName>
</protein>
<organism>
    <name type="scientific">Stichodactyla haddoni</name>
    <name type="common">Saddle carpet anemone</name>
    <name type="synonym">Haddon's sea anemone</name>
    <dbReference type="NCBI Taxonomy" id="475174"/>
    <lineage>
        <taxon>Eukaryota</taxon>
        <taxon>Metazoa</taxon>
        <taxon>Cnidaria</taxon>
        <taxon>Anthozoa</taxon>
        <taxon>Hexacorallia</taxon>
        <taxon>Actiniaria</taxon>
        <taxon>Stichodactylidae</taxon>
        <taxon>Stichodactyla</taxon>
    </lineage>
</organism>
<dbReference type="TCDB" id="8.B.15.1.1">
    <property type="family name" value="the sea anemone peptide toxin class 4 (shtx) family"/>
</dbReference>
<dbReference type="GO" id="GO:0005576">
    <property type="term" value="C:extracellular region"/>
    <property type="evidence" value="ECO:0007669"/>
    <property type="project" value="UniProtKB-SubCell"/>
</dbReference>
<dbReference type="GO" id="GO:0042151">
    <property type="term" value="C:nematocyst"/>
    <property type="evidence" value="ECO:0007669"/>
    <property type="project" value="UniProtKB-SubCell"/>
</dbReference>
<dbReference type="GO" id="GO:0015459">
    <property type="term" value="F:potassium channel regulator activity"/>
    <property type="evidence" value="ECO:0007669"/>
    <property type="project" value="UniProtKB-KW"/>
</dbReference>
<dbReference type="GO" id="GO:0090729">
    <property type="term" value="F:toxin activity"/>
    <property type="evidence" value="ECO:0007669"/>
    <property type="project" value="UniProtKB-KW"/>
</dbReference>
<name>BBH1B_STIHA</name>
<accession>P0C7W7</accession>
<reference key="1">
    <citation type="journal article" date="2008" name="Peptides">
        <title>Novel peptide toxins from the sea anemone Stichodactyla haddoni.</title>
        <authorList>
            <person name="Honma T."/>
            <person name="Kawahata S."/>
            <person name="Ishida M."/>
            <person name="Nagai H."/>
            <person name="Nagashima Y."/>
            <person name="Shiomi K."/>
        </authorList>
    </citation>
    <scope>PROTEIN SEQUENCE</scope>
    <scope>FUNCTION</scope>
    <scope>HYDROXYLATION AT PRO-6</scope>
    <scope>TOXIC DOSE</scope>
    <scope>DISULFIDE BONDS</scope>
</reference>
<reference key="2">
    <citation type="journal article" date="2012" name="Toxicon">
        <title>Development of a rational nomenclature for naming peptide and protein toxins from sea anemones.</title>
        <authorList>
            <person name="Oliveira J.S."/>
            <person name="Fuentes-Silva D."/>
            <person name="King G.F."/>
        </authorList>
    </citation>
    <scope>NOMENCLATURE</scope>
</reference>
<reference key="3">
    <citation type="journal article" date="2013" name="J. Biol. Chem.">
        <title>Sea anemone peptide with uncommon beta-hairpin structure inhibits acid-sensing ion channel 3 (ASIC3) and reveals analgesic activity.</title>
        <authorList>
            <person name="Osmakov D.I."/>
            <person name="Kozlov S.A."/>
            <person name="Andreev Y.A."/>
            <person name="Koshelev S.G."/>
            <person name="Sanamyan N.P."/>
            <person name="Sanamyan K.E."/>
            <person name="Dyachenko I.A."/>
            <person name="Bondarenko D.A."/>
            <person name="Murashev A.N."/>
            <person name="Mineev K.S."/>
            <person name="Arseniev A.S."/>
            <person name="Grishin E.V."/>
        </authorList>
    </citation>
    <scope>NOMENCLATURE</scope>
</reference>
<proteinExistence type="evidence at protein level"/>
<evidence type="ECO:0000269" key="1">
    <source>
    </source>
</evidence>
<evidence type="ECO:0000303" key="2">
    <source>
    </source>
</evidence>
<evidence type="ECO:0000303" key="3">
    <source>
    </source>
</evidence>
<evidence type="ECO:0000303" key="4">
    <source>
    </source>
</evidence>
<evidence type="ECO:0000305" key="5"/>
<evidence type="ECO:0000305" key="6">
    <source>
    </source>
</evidence>
<feature type="peptide" id="PRO_0000344519" description="Kappa-stichotoxin-Shd1a/kappa-stichotoxin-Shd1b" evidence="1">
    <location>
        <begin position="1"/>
        <end position="28"/>
    </location>
</feature>
<feature type="modified residue" description="4-hydroxyproline; in form SHTX-1 (Shd1a)" evidence="1">
    <location>
        <position position="6"/>
    </location>
</feature>
<feature type="disulfide bond" evidence="1">
    <location>
        <begin position="7"/>
        <end position="19"/>
    </location>
</feature>
<feature type="disulfide bond" evidence="1">
    <location>
        <begin position="10"/>
        <end position="25"/>
    </location>
</feature>
<comment type="function">
    <text>Kappa-stichotoxin-Shd1a: inhibits voltage-gated potassium channels (Kv).</text>
</comment>
<comment type="function">
    <text evidence="1">Kappa-stichotoxin-Shd1b: inhibits voltage-gated potassium channels (Kv). This toxin inhibits the binding of 125I-alpha-dendrotoxin to synaptosomal membranes (IC(50)=270 nM).</text>
</comment>
<comment type="subcellular location">
    <subcellularLocation>
        <location evidence="5">Secreted</location>
    </subcellularLocation>
    <subcellularLocation>
        <location evidence="5">Nematocyst</location>
    </subcellularLocation>
</comment>
<comment type="PTM">
    <text>Occurs in 2 forms which differ in the post-translational modification of Pro-6. In form SHTX-1 (Shd1a) Pro-6 is a hydroxyproline while in form SHTX-2 (Shd1b) Pro-6 is unmodified.</text>
</comment>
<comment type="toxic dose">
    <text evidence="1">PD(50) of SHTX-1 (Shd1a) and -2 (Shd1b) are 430 ug/kg into crabs.</text>
</comment>
<comment type="similarity">
    <text evidence="6">Belongs to the sea anemone BBH family.</text>
</comment>
<keyword id="KW-0903">Direct protein sequencing</keyword>
<keyword id="KW-1015">Disulfide bond</keyword>
<keyword id="KW-0379">Hydroxylation</keyword>
<keyword id="KW-0872">Ion channel impairing toxin</keyword>
<keyword id="KW-0166">Nematocyst</keyword>
<keyword id="KW-0632">Potassium channel impairing toxin</keyword>
<keyword id="KW-0964">Secreted</keyword>
<keyword id="KW-0800">Toxin</keyword>
<keyword id="KW-1220">Voltage-gated potassium channel impairing toxin</keyword>